<protein>
    <recommendedName>
        <fullName evidence="1">Large ribosomal subunit protein bL31B</fullName>
    </recommendedName>
    <alternativeName>
        <fullName evidence="2">50S ribosomal protein L31 type B</fullName>
    </alternativeName>
</protein>
<keyword id="KW-0687">Ribonucleoprotein</keyword>
<keyword id="KW-0689">Ribosomal protein</keyword>
<organism>
    <name type="scientific">Salmonella heidelberg (strain SL476)</name>
    <dbReference type="NCBI Taxonomy" id="454169"/>
    <lineage>
        <taxon>Bacteria</taxon>
        <taxon>Pseudomonadati</taxon>
        <taxon>Pseudomonadota</taxon>
        <taxon>Gammaproteobacteria</taxon>
        <taxon>Enterobacterales</taxon>
        <taxon>Enterobacteriaceae</taxon>
        <taxon>Salmonella</taxon>
    </lineage>
</organism>
<comment type="subunit">
    <text evidence="1">Part of the 50S ribosomal subunit.</text>
</comment>
<comment type="similarity">
    <text evidence="1">Belongs to the bacterial ribosomal protein bL31 family. Type B subfamily.</text>
</comment>
<feature type="chain" id="PRO_1000126835" description="Large ribosomal subunit protein bL31B">
    <location>
        <begin position="1"/>
        <end position="86"/>
    </location>
</feature>
<reference key="1">
    <citation type="journal article" date="2011" name="J. Bacteriol.">
        <title>Comparative genomics of 28 Salmonella enterica isolates: evidence for CRISPR-mediated adaptive sublineage evolution.</title>
        <authorList>
            <person name="Fricke W.F."/>
            <person name="Mammel M.K."/>
            <person name="McDermott P.F."/>
            <person name="Tartera C."/>
            <person name="White D.G."/>
            <person name="Leclerc J.E."/>
            <person name="Ravel J."/>
            <person name="Cebula T.A."/>
        </authorList>
    </citation>
    <scope>NUCLEOTIDE SEQUENCE [LARGE SCALE GENOMIC DNA]</scope>
    <source>
        <strain>SL476</strain>
    </source>
</reference>
<evidence type="ECO:0000255" key="1">
    <source>
        <dbReference type="HAMAP-Rule" id="MF_00502"/>
    </source>
</evidence>
<evidence type="ECO:0000305" key="2"/>
<name>RL31B_SALHS</name>
<accession>B4T9G3</accession>
<proteinExistence type="inferred from homology"/>
<dbReference type="EMBL" id="CP001120">
    <property type="protein sequence ID" value="ACF65999.1"/>
    <property type="molecule type" value="Genomic_DNA"/>
</dbReference>
<dbReference type="RefSeq" id="WP_000801415.1">
    <property type="nucleotide sequence ID" value="NC_011083.1"/>
</dbReference>
<dbReference type="SMR" id="B4T9G3"/>
<dbReference type="KEGG" id="seh:SeHA_C0572"/>
<dbReference type="HOGENOM" id="CLU_114306_2_1_6"/>
<dbReference type="Proteomes" id="UP000001866">
    <property type="component" value="Chromosome"/>
</dbReference>
<dbReference type="GO" id="GO:1990904">
    <property type="term" value="C:ribonucleoprotein complex"/>
    <property type="evidence" value="ECO:0007669"/>
    <property type="project" value="UniProtKB-KW"/>
</dbReference>
<dbReference type="GO" id="GO:0005840">
    <property type="term" value="C:ribosome"/>
    <property type="evidence" value="ECO:0007669"/>
    <property type="project" value="UniProtKB-KW"/>
</dbReference>
<dbReference type="GO" id="GO:0003735">
    <property type="term" value="F:structural constituent of ribosome"/>
    <property type="evidence" value="ECO:0007669"/>
    <property type="project" value="InterPro"/>
</dbReference>
<dbReference type="GO" id="GO:0006412">
    <property type="term" value="P:translation"/>
    <property type="evidence" value="ECO:0007669"/>
    <property type="project" value="UniProtKB-UniRule"/>
</dbReference>
<dbReference type="Gene3D" id="4.10.830.30">
    <property type="entry name" value="Ribosomal protein L31"/>
    <property type="match status" value="1"/>
</dbReference>
<dbReference type="HAMAP" id="MF_00502">
    <property type="entry name" value="Ribosomal_bL31_2"/>
    <property type="match status" value="1"/>
</dbReference>
<dbReference type="InterPro" id="IPR034704">
    <property type="entry name" value="Ribosomal_bL28/bL31-like_sf"/>
</dbReference>
<dbReference type="InterPro" id="IPR002150">
    <property type="entry name" value="Ribosomal_bL31"/>
</dbReference>
<dbReference type="InterPro" id="IPR027493">
    <property type="entry name" value="Ribosomal_bL31_B"/>
</dbReference>
<dbReference type="InterPro" id="IPR042105">
    <property type="entry name" value="Ribosomal_bL31_sf"/>
</dbReference>
<dbReference type="NCBIfam" id="TIGR00105">
    <property type="entry name" value="L31"/>
    <property type="match status" value="1"/>
</dbReference>
<dbReference type="NCBIfam" id="NF002462">
    <property type="entry name" value="PRK01678.1"/>
    <property type="match status" value="1"/>
</dbReference>
<dbReference type="PANTHER" id="PTHR33280">
    <property type="entry name" value="50S RIBOSOMAL PROTEIN L31, CHLOROPLASTIC"/>
    <property type="match status" value="1"/>
</dbReference>
<dbReference type="PANTHER" id="PTHR33280:SF1">
    <property type="entry name" value="LARGE RIBOSOMAL SUBUNIT PROTEIN BL31C"/>
    <property type="match status" value="1"/>
</dbReference>
<dbReference type="Pfam" id="PF01197">
    <property type="entry name" value="Ribosomal_L31"/>
    <property type="match status" value="1"/>
</dbReference>
<dbReference type="PRINTS" id="PR01249">
    <property type="entry name" value="RIBOSOMALL31"/>
</dbReference>
<dbReference type="SUPFAM" id="SSF143800">
    <property type="entry name" value="L28p-like"/>
    <property type="match status" value="1"/>
</dbReference>
<sequence>MKPDIHPVYRTVVFHDTSANEYVKVGSTIKTEREIELDGVTYPYVTIDVSSKSHPFYTGRQKTFDSESSAARFQKRFGHFIGAKRG</sequence>
<gene>
    <name evidence="1" type="primary">rpmE2</name>
    <name type="ordered locus">SeHA_C0572</name>
</gene>